<proteinExistence type="inferred from homology"/>
<gene>
    <name type="primary">RpS21</name>
    <name type="synonym">oho23B</name>
    <name type="ORF">GI19989</name>
</gene>
<name>RS21_DROMO</name>
<protein>
    <recommendedName>
        <fullName evidence="5">Small ribosomal subunit protein eS21</fullName>
    </recommendedName>
    <alternativeName>
        <fullName evidence="1">40S ribosomal protein S21</fullName>
    </alternativeName>
    <alternativeName>
        <fullName evidence="1">Overgrown hematopoietic organs at 23B</fullName>
    </alternativeName>
</protein>
<evidence type="ECO:0000250" key="1">
    <source>
        <dbReference type="UniProtKB" id="O76927"/>
    </source>
</evidence>
<evidence type="ECO:0000250" key="2">
    <source>
        <dbReference type="UniProtKB" id="P63220"/>
    </source>
</evidence>
<evidence type="ECO:0000250" key="3">
    <source>
        <dbReference type="UniProtKB" id="P63221"/>
    </source>
</evidence>
<evidence type="ECO:0000255" key="4"/>
<evidence type="ECO:0000305" key="5"/>
<evidence type="ECO:0000312" key="6">
    <source>
        <dbReference type="EMBL" id="EDW13440.1"/>
    </source>
</evidence>
<keyword id="KW-0963">Cytoplasm</keyword>
<keyword id="KW-0217">Developmental protein</keyword>
<keyword id="KW-0256">Endoplasmic reticulum</keyword>
<keyword id="KW-1185">Reference proteome</keyword>
<keyword id="KW-0687">Ribonucleoprotein</keyword>
<keyword id="KW-0689">Ribosomal protein</keyword>
<keyword id="KW-0698">rRNA processing</keyword>
<keyword id="KW-0810">Translation regulation</keyword>
<feature type="chain" id="PRO_0000395419" description="Small ribosomal subunit protein eS21">
    <location>
        <begin position="1"/>
        <end position="83"/>
    </location>
</feature>
<accession>B4KIE3</accession>
<reference evidence="6" key="1">
    <citation type="journal article" date="2007" name="Nature">
        <title>Evolution of genes and genomes on the Drosophila phylogeny.</title>
        <authorList>
            <consortium name="Drosophila 12 genomes consortium"/>
        </authorList>
    </citation>
    <scope>NUCLEOTIDE SEQUENCE [LARGE SCALE GENOMIC DNA]</scope>
    <source>
        <strain evidence="6">Tucson 15081-1352.22</strain>
    </source>
</reference>
<comment type="function">
    <text evidence="1">May be an associated component of the ribosome rather than a core structural subunit. May act as a translation initiation factor. Has a role in regulation of cell proliferation in the hematopoietic organs and the imaginal disks of larva (By similarity).</text>
</comment>
<comment type="subunit">
    <text evidence="1">Component of the 40S small ribosomal subunit. Interacts with sta.</text>
</comment>
<comment type="subcellular location">
    <subcellularLocation>
        <location evidence="2">Cytoplasm</location>
        <location evidence="2">Cytosol</location>
    </subcellularLocation>
    <subcellularLocation>
        <location evidence="2">Cytoplasm</location>
    </subcellularLocation>
    <subcellularLocation>
        <location evidence="3">Rough endoplasmic reticulum</location>
    </subcellularLocation>
    <text evidence="2 3">Detected on cytosolic polysomes (By similarity). Detected in ribosomes that are associated with the rough endoplasmic reticulum (By similarity).</text>
</comment>
<comment type="similarity">
    <text evidence="4">Belongs to the eukaryotic ribosomal protein eS21 family.</text>
</comment>
<organism>
    <name type="scientific">Drosophila mojavensis</name>
    <name type="common">Fruit fly</name>
    <dbReference type="NCBI Taxonomy" id="7230"/>
    <lineage>
        <taxon>Eukaryota</taxon>
        <taxon>Metazoa</taxon>
        <taxon>Ecdysozoa</taxon>
        <taxon>Arthropoda</taxon>
        <taxon>Hexapoda</taxon>
        <taxon>Insecta</taxon>
        <taxon>Pterygota</taxon>
        <taxon>Neoptera</taxon>
        <taxon>Endopterygota</taxon>
        <taxon>Diptera</taxon>
        <taxon>Brachycera</taxon>
        <taxon>Muscomorpha</taxon>
        <taxon>Ephydroidea</taxon>
        <taxon>Drosophilidae</taxon>
        <taxon>Drosophila</taxon>
    </lineage>
</organism>
<sequence length="83" mass="9165">MENDAGENVDLYVPRKCSASNRIIHAKDHASVQLSIVVVDPETGRQTDGTKTYAICGEIRRMGESDDCIVRLAKKDGLITKNF</sequence>
<dbReference type="EMBL" id="CH933807">
    <property type="protein sequence ID" value="EDW13440.1"/>
    <property type="molecule type" value="Genomic_DNA"/>
</dbReference>
<dbReference type="SMR" id="B4KIE3"/>
<dbReference type="FunCoup" id="B4KIE3">
    <property type="interactions" value="1389"/>
</dbReference>
<dbReference type="EnsemblMetazoa" id="FBtr0170714">
    <property type="protein sequence ID" value="FBpp0169206"/>
    <property type="gene ID" value="FBgn0142726"/>
</dbReference>
<dbReference type="EnsemblMetazoa" id="XM_002003962.4">
    <property type="protein sequence ID" value="XP_002003998.1"/>
    <property type="gene ID" value="LOC6578076"/>
</dbReference>
<dbReference type="GeneID" id="6578076"/>
<dbReference type="KEGG" id="dmo:Dmoj_GI19989"/>
<dbReference type="CTD" id="6227"/>
<dbReference type="eggNOG" id="KOG3486">
    <property type="taxonomic scope" value="Eukaryota"/>
</dbReference>
<dbReference type="HOGENOM" id="CLU_167122_2_0_1"/>
<dbReference type="InParanoid" id="B4KIE3"/>
<dbReference type="OMA" id="GESDACM"/>
<dbReference type="OrthoDB" id="278325at2759"/>
<dbReference type="PhylomeDB" id="B4KIE3"/>
<dbReference type="ChiTaRS" id="RpS21">
    <property type="organism name" value="fly"/>
</dbReference>
<dbReference type="Proteomes" id="UP000009192">
    <property type="component" value="Unassembled WGS sequence"/>
</dbReference>
<dbReference type="GO" id="GO:0005829">
    <property type="term" value="C:cytosol"/>
    <property type="evidence" value="ECO:0007669"/>
    <property type="project" value="UniProtKB-SubCell"/>
</dbReference>
<dbReference type="GO" id="GO:1990904">
    <property type="term" value="C:ribonucleoprotein complex"/>
    <property type="evidence" value="ECO:0007669"/>
    <property type="project" value="UniProtKB-KW"/>
</dbReference>
<dbReference type="GO" id="GO:0005840">
    <property type="term" value="C:ribosome"/>
    <property type="evidence" value="ECO:0000250"/>
    <property type="project" value="UniProtKB"/>
</dbReference>
<dbReference type="GO" id="GO:0005791">
    <property type="term" value="C:rough endoplasmic reticulum"/>
    <property type="evidence" value="ECO:0007669"/>
    <property type="project" value="UniProtKB-SubCell"/>
</dbReference>
<dbReference type="GO" id="GO:0043022">
    <property type="term" value="F:ribosome binding"/>
    <property type="evidence" value="ECO:0000250"/>
    <property type="project" value="UniProtKB"/>
</dbReference>
<dbReference type="GO" id="GO:0003735">
    <property type="term" value="F:structural constituent of ribosome"/>
    <property type="evidence" value="ECO:0007669"/>
    <property type="project" value="InterPro"/>
</dbReference>
<dbReference type="GO" id="GO:0042127">
    <property type="term" value="P:regulation of cell population proliferation"/>
    <property type="evidence" value="ECO:0000250"/>
    <property type="project" value="UniProtKB"/>
</dbReference>
<dbReference type="GO" id="GO:0006417">
    <property type="term" value="P:regulation of translation"/>
    <property type="evidence" value="ECO:0007669"/>
    <property type="project" value="UniProtKB-KW"/>
</dbReference>
<dbReference type="GO" id="GO:0006364">
    <property type="term" value="P:rRNA processing"/>
    <property type="evidence" value="ECO:0007669"/>
    <property type="project" value="UniProtKB-KW"/>
</dbReference>
<dbReference type="GO" id="GO:0006412">
    <property type="term" value="P:translation"/>
    <property type="evidence" value="ECO:0007669"/>
    <property type="project" value="InterPro"/>
</dbReference>
<dbReference type="FunFam" id="3.30.1230.20:FF:000001">
    <property type="entry name" value="40S ribosomal protein S21"/>
    <property type="match status" value="1"/>
</dbReference>
<dbReference type="Gene3D" id="3.30.1230.20">
    <property type="match status" value="1"/>
</dbReference>
<dbReference type="InterPro" id="IPR001931">
    <property type="entry name" value="Ribosomal_eS21"/>
</dbReference>
<dbReference type="InterPro" id="IPR018279">
    <property type="entry name" value="Ribosomal_eS21_CS"/>
</dbReference>
<dbReference type="InterPro" id="IPR038579">
    <property type="entry name" value="Ribosomal_eS21_sf"/>
</dbReference>
<dbReference type="PANTHER" id="PTHR10442">
    <property type="entry name" value="40S RIBOSOMAL PROTEIN S21"/>
    <property type="match status" value="1"/>
</dbReference>
<dbReference type="Pfam" id="PF01249">
    <property type="entry name" value="Ribosomal_S21e"/>
    <property type="match status" value="1"/>
</dbReference>
<dbReference type="PIRSF" id="PIRSF002148">
    <property type="entry name" value="Ribosomal_S21e"/>
    <property type="match status" value="1"/>
</dbReference>
<dbReference type="PROSITE" id="PS00996">
    <property type="entry name" value="RIBOSOMAL_S21E"/>
    <property type="match status" value="1"/>
</dbReference>